<organism>
    <name type="scientific">Wolinella succinogenes (strain ATCC 29543 / DSM 1740 / CCUG 13145 / JCM 31913 / LMG 7466 / NCTC 11488 / FDC 602W)</name>
    <name type="common">Vibrio succinogenes</name>
    <dbReference type="NCBI Taxonomy" id="273121"/>
    <lineage>
        <taxon>Bacteria</taxon>
        <taxon>Pseudomonadati</taxon>
        <taxon>Campylobacterota</taxon>
        <taxon>Epsilonproteobacteria</taxon>
        <taxon>Campylobacterales</taxon>
        <taxon>Helicobacteraceae</taxon>
        <taxon>Wolinella</taxon>
    </lineage>
</organism>
<accession>Q7MST9</accession>
<proteinExistence type="inferred from homology"/>
<keyword id="KW-0489">Methyltransferase</keyword>
<keyword id="KW-1185">Reference proteome</keyword>
<keyword id="KW-0949">S-adenosyl-L-methionine</keyword>
<keyword id="KW-0808">Transferase</keyword>
<keyword id="KW-0819">tRNA processing</keyword>
<evidence type="ECO:0000255" key="1">
    <source>
        <dbReference type="HAMAP-Rule" id="MF_01057"/>
    </source>
</evidence>
<sequence length="388" mass="45635">MPHFIASSFTHPDYPFEEEGYCFSDSLSNLLHPHEELVRVEVEGKEFFLRIKHRLKENDFIIRFDKSTRVSPVGIIKKALRIFAQKSQAQILSDNLSEEDSIRQKRLTPFLKTPEFFMHEAHQGQYWVEIGFGSGRHLLHQAKAHPEKRFIGLEIHTPSIEQVLRRLELEEISNVSIVSYDARVFLELLPSNAIERLFVHFPVPWDKKPHRRIFSRAFLNEAIRTLGVGGVLELRTDSEDYFLFAKELLLELNRVHFSIRKNFDAPISSKYEDRWRKQNKNIYDLLLHNDQHSPDPLRPSDFSFKPLKRCDAAELRREIREGWFASIERLYRSKDGKSMAIRSSFGDFAYPEKKYLWIKGEEARYFGSSPIPSLANHQAHKLLEEWLS</sequence>
<protein>
    <recommendedName>
        <fullName evidence="1">tRNA (guanine-N(7)-)-methyltransferase</fullName>
        <ecNumber evidence="1">2.1.1.33</ecNumber>
    </recommendedName>
    <alternativeName>
        <fullName evidence="1">tRNA (guanine(46)-N(7))-methyltransferase</fullName>
    </alternativeName>
    <alternativeName>
        <fullName evidence="1">tRNA(m7G46)-methyltransferase</fullName>
    </alternativeName>
</protein>
<dbReference type="EC" id="2.1.1.33" evidence="1"/>
<dbReference type="EMBL" id="BX571657">
    <property type="protein sequence ID" value="CAE09308.1"/>
    <property type="molecule type" value="Genomic_DNA"/>
</dbReference>
<dbReference type="RefSeq" id="WP_011138108.1">
    <property type="nucleotide sequence ID" value="NC_005090.1"/>
</dbReference>
<dbReference type="SMR" id="Q7MST9"/>
<dbReference type="STRING" id="273121.WS0145"/>
<dbReference type="KEGG" id="wsu:WS0145"/>
<dbReference type="eggNOG" id="COG0220">
    <property type="taxonomic scope" value="Bacteria"/>
</dbReference>
<dbReference type="HOGENOM" id="CLU_041532_0_0_7"/>
<dbReference type="UniPathway" id="UPA00989"/>
<dbReference type="Proteomes" id="UP000000422">
    <property type="component" value="Chromosome"/>
</dbReference>
<dbReference type="GO" id="GO:0043527">
    <property type="term" value="C:tRNA methyltransferase complex"/>
    <property type="evidence" value="ECO:0007669"/>
    <property type="project" value="TreeGrafter"/>
</dbReference>
<dbReference type="GO" id="GO:0008176">
    <property type="term" value="F:tRNA (guanine(46)-N7)-methyltransferase activity"/>
    <property type="evidence" value="ECO:0007669"/>
    <property type="project" value="UniProtKB-UniRule"/>
</dbReference>
<dbReference type="CDD" id="cd02440">
    <property type="entry name" value="AdoMet_MTases"/>
    <property type="match status" value="1"/>
</dbReference>
<dbReference type="Gene3D" id="3.40.50.150">
    <property type="entry name" value="Vaccinia Virus protein VP39"/>
    <property type="match status" value="1"/>
</dbReference>
<dbReference type="HAMAP" id="MF_01057">
    <property type="entry name" value="tRNA_methyltr_TrmB"/>
    <property type="match status" value="1"/>
</dbReference>
<dbReference type="InterPro" id="IPR029063">
    <property type="entry name" value="SAM-dependent_MTases_sf"/>
</dbReference>
<dbReference type="InterPro" id="IPR003358">
    <property type="entry name" value="tRNA_(Gua-N-7)_MeTrfase_Trmb"/>
</dbReference>
<dbReference type="InterPro" id="IPR055361">
    <property type="entry name" value="tRNA_methyltr_TrmB_bact"/>
</dbReference>
<dbReference type="NCBIfam" id="NF010719">
    <property type="entry name" value="PRK14121.1"/>
    <property type="match status" value="1"/>
</dbReference>
<dbReference type="NCBIfam" id="TIGR00091">
    <property type="entry name" value="tRNA (guanosine(46)-N7)-methyltransferase TrmB"/>
    <property type="match status" value="1"/>
</dbReference>
<dbReference type="PANTHER" id="PTHR23417">
    <property type="entry name" value="3-DEOXY-D-MANNO-OCTULOSONIC-ACID TRANSFERASE/TRNA GUANINE-N 7 - -METHYLTRANSFERASE"/>
    <property type="match status" value="1"/>
</dbReference>
<dbReference type="PANTHER" id="PTHR23417:SF14">
    <property type="entry name" value="PENTACOTRIPEPTIDE-REPEAT REGION OF PRORP DOMAIN-CONTAINING PROTEIN"/>
    <property type="match status" value="1"/>
</dbReference>
<dbReference type="Pfam" id="PF02390">
    <property type="entry name" value="Methyltransf_4"/>
    <property type="match status" value="1"/>
</dbReference>
<dbReference type="SUPFAM" id="SSF53335">
    <property type="entry name" value="S-adenosyl-L-methionine-dependent methyltransferases"/>
    <property type="match status" value="1"/>
</dbReference>
<dbReference type="PROSITE" id="PS51625">
    <property type="entry name" value="SAM_MT_TRMB"/>
    <property type="match status" value="1"/>
</dbReference>
<name>TRMB_WOLSU</name>
<comment type="function">
    <text evidence="1">Catalyzes the formation of N(7)-methylguanine at position 46 (m7G46) in tRNA.</text>
</comment>
<comment type="catalytic activity">
    <reaction evidence="1">
        <text>guanosine(46) in tRNA + S-adenosyl-L-methionine = N(7)-methylguanosine(46) in tRNA + S-adenosyl-L-homocysteine</text>
        <dbReference type="Rhea" id="RHEA:42708"/>
        <dbReference type="Rhea" id="RHEA-COMP:10188"/>
        <dbReference type="Rhea" id="RHEA-COMP:10189"/>
        <dbReference type="ChEBI" id="CHEBI:57856"/>
        <dbReference type="ChEBI" id="CHEBI:59789"/>
        <dbReference type="ChEBI" id="CHEBI:74269"/>
        <dbReference type="ChEBI" id="CHEBI:74480"/>
        <dbReference type="EC" id="2.1.1.33"/>
    </reaction>
</comment>
<comment type="pathway">
    <text evidence="1">tRNA modification; N(7)-methylguanine-tRNA biosynthesis.</text>
</comment>
<comment type="similarity">
    <text evidence="1">Belongs to the class I-like SAM-binding methyltransferase superfamily. TrmB family.</text>
</comment>
<feature type="chain" id="PRO_0000171423" description="tRNA (guanine-N(7)-)-methyltransferase">
    <location>
        <begin position="1"/>
        <end position="388"/>
    </location>
</feature>
<feature type="binding site" evidence="1">
    <location>
        <position position="129"/>
    </location>
    <ligand>
        <name>S-adenosyl-L-methionine</name>
        <dbReference type="ChEBI" id="CHEBI:59789"/>
    </ligand>
</feature>
<feature type="binding site" evidence="1">
    <location>
        <position position="154"/>
    </location>
    <ligand>
        <name>S-adenosyl-L-methionine</name>
        <dbReference type="ChEBI" id="CHEBI:59789"/>
    </ligand>
</feature>
<feature type="binding site" evidence="1">
    <location>
        <position position="181"/>
    </location>
    <ligand>
        <name>S-adenosyl-L-methionine</name>
        <dbReference type="ChEBI" id="CHEBI:59789"/>
    </ligand>
</feature>
<feature type="binding site" evidence="1">
    <location>
        <position position="207"/>
    </location>
    <ligand>
        <name>substrate</name>
    </ligand>
</feature>
<feature type="binding site" evidence="1">
    <location>
        <position position="237"/>
    </location>
    <ligand>
        <name>substrate</name>
    </ligand>
</feature>
<reference key="1">
    <citation type="journal article" date="2003" name="Proc. Natl. Acad. Sci. U.S.A.">
        <title>Complete genome sequence and analysis of Wolinella succinogenes.</title>
        <authorList>
            <person name="Baar C."/>
            <person name="Eppinger M."/>
            <person name="Raddatz G."/>
            <person name="Simon J."/>
            <person name="Lanz C."/>
            <person name="Klimmek O."/>
            <person name="Nandakumar R."/>
            <person name="Gross R."/>
            <person name="Rosinus A."/>
            <person name="Keller H."/>
            <person name="Jagtap P."/>
            <person name="Linke B."/>
            <person name="Meyer F."/>
            <person name="Lederer H."/>
            <person name="Schuster S.C."/>
        </authorList>
    </citation>
    <scope>NUCLEOTIDE SEQUENCE [LARGE SCALE GENOMIC DNA]</scope>
    <source>
        <strain>ATCC 29543 / DSM 1740 / CCUG 13145 / JCM 31913 / LMG 7466 / NCTC 11488 / FDC 602W</strain>
    </source>
</reference>
<gene>
    <name evidence="1" type="primary">trmB</name>
    <name type="ordered locus">WS0145</name>
</gene>